<organism>
    <name type="scientific">Geobacillus kaustophilus (strain HTA426)</name>
    <dbReference type="NCBI Taxonomy" id="235909"/>
    <lineage>
        <taxon>Bacteria</taxon>
        <taxon>Bacillati</taxon>
        <taxon>Bacillota</taxon>
        <taxon>Bacilli</taxon>
        <taxon>Bacillales</taxon>
        <taxon>Anoxybacillaceae</taxon>
        <taxon>Geobacillus</taxon>
        <taxon>Geobacillus thermoleovorans group</taxon>
    </lineage>
</organism>
<sequence length="235" mass="27144">MLTYDQWEKAEKPSFPSDNETKGALDVLAWAYREYGDEIVYACSFGIEGIVLIDLISQVKPDAEIVFLDTGLHFPETYDTIAKVKEKYPSLRIVMKQPRLTLEEQKAQFGDELWKRDPNKCCELRKVIPLREVLTGVTAWISGLRREQSPTRRHVEYINKDDKFRSIKVCPLIHWTWKDVWNYVYKRHLPYNVLHDRGYPSIGCAPCTAPATDPNDLRSGRWAGQGKTECGLHLA</sequence>
<feature type="chain" id="PRO_1000008926" description="Adenosine 5'-phosphosulfate reductase">
    <location>
        <begin position="1"/>
        <end position="235"/>
    </location>
</feature>
<feature type="active site" description="Nucleophile; cysteine thiosulfonate intermediate" evidence="1">
    <location>
        <position position="230"/>
    </location>
</feature>
<feature type="binding site" evidence="1">
    <location>
        <position position="121"/>
    </location>
    <ligand>
        <name>[4Fe-4S] cluster</name>
        <dbReference type="ChEBI" id="CHEBI:49883"/>
    </ligand>
</feature>
<feature type="binding site" evidence="1">
    <location>
        <position position="122"/>
    </location>
    <ligand>
        <name>[4Fe-4S] cluster</name>
        <dbReference type="ChEBI" id="CHEBI:49883"/>
    </ligand>
</feature>
<feature type="binding site" evidence="1">
    <location>
        <position position="204"/>
    </location>
    <ligand>
        <name>[4Fe-4S] cluster</name>
        <dbReference type="ChEBI" id="CHEBI:49883"/>
    </ligand>
</feature>
<feature type="binding site" evidence="1">
    <location>
        <position position="207"/>
    </location>
    <ligand>
        <name>[4Fe-4S] cluster</name>
        <dbReference type="ChEBI" id="CHEBI:49883"/>
    </ligand>
</feature>
<accession>Q5L2X9</accession>
<gene>
    <name evidence="1" type="primary">cysH</name>
    <name type="ordered locus">GK0416</name>
</gene>
<proteinExistence type="inferred from homology"/>
<comment type="function">
    <text evidence="1">Catalyzes the formation of sulfite from adenosine 5'-phosphosulfate (APS) using thioredoxin as an electron donor.</text>
</comment>
<comment type="catalytic activity">
    <reaction evidence="1">
        <text>[thioredoxin]-disulfide + sulfite + AMP + 2 H(+) = adenosine 5'-phosphosulfate + [thioredoxin]-dithiol</text>
        <dbReference type="Rhea" id="RHEA:21976"/>
        <dbReference type="Rhea" id="RHEA-COMP:10698"/>
        <dbReference type="Rhea" id="RHEA-COMP:10700"/>
        <dbReference type="ChEBI" id="CHEBI:15378"/>
        <dbReference type="ChEBI" id="CHEBI:17359"/>
        <dbReference type="ChEBI" id="CHEBI:29950"/>
        <dbReference type="ChEBI" id="CHEBI:50058"/>
        <dbReference type="ChEBI" id="CHEBI:58243"/>
        <dbReference type="ChEBI" id="CHEBI:456215"/>
        <dbReference type="EC" id="1.8.4.10"/>
    </reaction>
</comment>
<comment type="cofactor">
    <cofactor evidence="1">
        <name>[4Fe-4S] cluster</name>
        <dbReference type="ChEBI" id="CHEBI:49883"/>
    </cofactor>
    <text evidence="1">Binds 1 [4Fe-4S] cluster per subunit.</text>
</comment>
<comment type="pathway">
    <text evidence="1">Sulfur metabolism; hydrogen sulfide biosynthesis; sulfite from sulfate.</text>
</comment>
<comment type="subcellular location">
    <subcellularLocation>
        <location evidence="1">Cytoplasm</location>
    </subcellularLocation>
</comment>
<comment type="similarity">
    <text evidence="1">Belongs to the PAPS reductase family. CysH subfamily.</text>
</comment>
<keyword id="KW-0963">Cytoplasm</keyword>
<keyword id="KW-0408">Iron</keyword>
<keyword id="KW-0411">Iron-sulfur</keyword>
<keyword id="KW-0479">Metal-binding</keyword>
<keyword id="KW-0560">Oxidoreductase</keyword>
<keyword id="KW-1185">Reference proteome</keyword>
<reference key="1">
    <citation type="journal article" date="2004" name="Nucleic Acids Res.">
        <title>Thermoadaptation trait revealed by the genome sequence of thermophilic Geobacillus kaustophilus.</title>
        <authorList>
            <person name="Takami H."/>
            <person name="Takaki Y."/>
            <person name="Chee G.-J."/>
            <person name="Nishi S."/>
            <person name="Shimamura S."/>
            <person name="Suzuki H."/>
            <person name="Matsui S."/>
            <person name="Uchiyama I."/>
        </authorList>
    </citation>
    <scope>NUCLEOTIDE SEQUENCE [LARGE SCALE GENOMIC DNA]</scope>
    <source>
        <strain>HTA426</strain>
    </source>
</reference>
<dbReference type="EC" id="1.8.4.10" evidence="1"/>
<dbReference type="EMBL" id="BA000043">
    <property type="protein sequence ID" value="BAD74701.1"/>
    <property type="molecule type" value="Genomic_DNA"/>
</dbReference>
<dbReference type="RefSeq" id="WP_011229920.1">
    <property type="nucleotide sequence ID" value="NC_006510.1"/>
</dbReference>
<dbReference type="SMR" id="Q5L2X9"/>
<dbReference type="STRING" id="235909.GK0416"/>
<dbReference type="KEGG" id="gka:GK0416"/>
<dbReference type="eggNOG" id="COG0175">
    <property type="taxonomic scope" value="Bacteria"/>
</dbReference>
<dbReference type="HOGENOM" id="CLU_044089_2_1_9"/>
<dbReference type="Proteomes" id="UP000001172">
    <property type="component" value="Chromosome"/>
</dbReference>
<dbReference type="GO" id="GO:0005737">
    <property type="term" value="C:cytoplasm"/>
    <property type="evidence" value="ECO:0007669"/>
    <property type="project" value="UniProtKB-SubCell"/>
</dbReference>
<dbReference type="GO" id="GO:0051539">
    <property type="term" value="F:4 iron, 4 sulfur cluster binding"/>
    <property type="evidence" value="ECO:0007669"/>
    <property type="project" value="UniProtKB-UniRule"/>
</dbReference>
<dbReference type="GO" id="GO:0043866">
    <property type="term" value="F:adenylyl-sulfate reductase (thioredoxin) activity"/>
    <property type="evidence" value="ECO:0007669"/>
    <property type="project" value="UniProtKB-EC"/>
</dbReference>
<dbReference type="GO" id="GO:0046872">
    <property type="term" value="F:metal ion binding"/>
    <property type="evidence" value="ECO:0007669"/>
    <property type="project" value="UniProtKB-KW"/>
</dbReference>
<dbReference type="GO" id="GO:0004604">
    <property type="term" value="F:phosphoadenylyl-sulfate reductase (thioredoxin) activity"/>
    <property type="evidence" value="ECO:0007669"/>
    <property type="project" value="UniProtKB-UniRule"/>
</dbReference>
<dbReference type="GO" id="GO:0019344">
    <property type="term" value="P:cysteine biosynthetic process"/>
    <property type="evidence" value="ECO:0007669"/>
    <property type="project" value="InterPro"/>
</dbReference>
<dbReference type="GO" id="GO:0070814">
    <property type="term" value="P:hydrogen sulfide biosynthetic process"/>
    <property type="evidence" value="ECO:0007669"/>
    <property type="project" value="UniProtKB-UniRule"/>
</dbReference>
<dbReference type="GO" id="GO:0019379">
    <property type="term" value="P:sulfate assimilation, phosphoadenylyl sulfate reduction by phosphoadenylyl-sulfate reductase (thioredoxin)"/>
    <property type="evidence" value="ECO:0007669"/>
    <property type="project" value="UniProtKB-UniRule"/>
</dbReference>
<dbReference type="CDD" id="cd23945">
    <property type="entry name" value="PAPS_reductase"/>
    <property type="match status" value="1"/>
</dbReference>
<dbReference type="FunFam" id="3.40.50.620:FF:000095">
    <property type="entry name" value="Phosphoadenosine phosphosulfate reductase"/>
    <property type="match status" value="1"/>
</dbReference>
<dbReference type="Gene3D" id="3.40.50.620">
    <property type="entry name" value="HUPs"/>
    <property type="match status" value="1"/>
</dbReference>
<dbReference type="HAMAP" id="MF_00063">
    <property type="entry name" value="CysH"/>
    <property type="match status" value="1"/>
</dbReference>
<dbReference type="InterPro" id="IPR011798">
    <property type="entry name" value="APS_reductase"/>
</dbReference>
<dbReference type="InterPro" id="IPR004511">
    <property type="entry name" value="PAPS/APS_Rdtase"/>
</dbReference>
<dbReference type="InterPro" id="IPR002500">
    <property type="entry name" value="PAPS_reduct_dom"/>
</dbReference>
<dbReference type="InterPro" id="IPR014729">
    <property type="entry name" value="Rossmann-like_a/b/a_fold"/>
</dbReference>
<dbReference type="NCBIfam" id="TIGR02055">
    <property type="entry name" value="APS_reductase"/>
    <property type="match status" value="1"/>
</dbReference>
<dbReference type="NCBIfam" id="TIGR00434">
    <property type="entry name" value="cysH"/>
    <property type="match status" value="1"/>
</dbReference>
<dbReference type="NCBIfam" id="NF002537">
    <property type="entry name" value="PRK02090.1"/>
    <property type="match status" value="1"/>
</dbReference>
<dbReference type="PANTHER" id="PTHR46509">
    <property type="entry name" value="PHOSPHOADENOSINE PHOSPHOSULFATE REDUCTASE"/>
    <property type="match status" value="1"/>
</dbReference>
<dbReference type="PANTHER" id="PTHR46509:SF1">
    <property type="entry name" value="PHOSPHOADENOSINE PHOSPHOSULFATE REDUCTASE"/>
    <property type="match status" value="1"/>
</dbReference>
<dbReference type="Pfam" id="PF01507">
    <property type="entry name" value="PAPS_reduct"/>
    <property type="match status" value="1"/>
</dbReference>
<dbReference type="PIRSF" id="PIRSF000857">
    <property type="entry name" value="PAPS_reductase"/>
    <property type="match status" value="1"/>
</dbReference>
<dbReference type="SUPFAM" id="SSF52402">
    <property type="entry name" value="Adenine nucleotide alpha hydrolases-like"/>
    <property type="match status" value="1"/>
</dbReference>
<protein>
    <recommendedName>
        <fullName evidence="1">Adenosine 5'-phosphosulfate reductase</fullName>
        <shortName evidence="1">APS reductase</shortName>
        <ecNumber evidence="1">1.8.4.10</ecNumber>
    </recommendedName>
    <alternativeName>
        <fullName evidence="1">5'-adenylylsulfate reductase</fullName>
    </alternativeName>
    <alternativeName>
        <fullName evidence="1">Thioredoxin-dependent 5'-adenylylsulfate reductase</fullName>
    </alternativeName>
</protein>
<evidence type="ECO:0000255" key="1">
    <source>
        <dbReference type="HAMAP-Rule" id="MF_00063"/>
    </source>
</evidence>
<name>CYSH_GEOKA</name>